<geneLocation type="plasmid">
    <name>sym pNGR234a</name>
</geneLocation>
<proteinExistence type="predicted"/>
<dbReference type="EMBL" id="U00090">
    <property type="protein sequence ID" value="AAB92444.1"/>
    <property type="molecule type" value="Genomic_DNA"/>
</dbReference>
<dbReference type="RefSeq" id="NP_443833.1">
    <property type="nucleotide sequence ID" value="NC_000914.2"/>
</dbReference>
<dbReference type="KEGG" id="rhi:NGR_a03930"/>
<dbReference type="HOGENOM" id="CLU_1414180_0_0_5"/>
<dbReference type="OrthoDB" id="9885793at2"/>
<dbReference type="Proteomes" id="UP000001054">
    <property type="component" value="Plasmid pNGR234a"/>
</dbReference>
<reference key="1">
    <citation type="journal article" date="1997" name="Nature">
        <title>Molecular basis of symbiosis between Rhizobium and legumes.</title>
        <authorList>
            <person name="Freiberg C.A."/>
            <person name="Fellay R."/>
            <person name="Bairoch A."/>
            <person name="Broughton W.J."/>
            <person name="Rosenthal A."/>
            <person name="Perret X."/>
        </authorList>
    </citation>
    <scope>NUCLEOTIDE SEQUENCE [LARGE SCALE GENOMIC DNA]</scope>
    <source>
        <strain>NBRC 101917 / NGR234</strain>
    </source>
</reference>
<reference key="2">
    <citation type="journal article" date="2009" name="Appl. Environ. Microbiol.">
        <title>Rhizobium sp. strain NGR234 possesses a remarkable number of secretion systems.</title>
        <authorList>
            <person name="Schmeisser C."/>
            <person name="Liesegang H."/>
            <person name="Krysciak D."/>
            <person name="Bakkou N."/>
            <person name="Le Quere A."/>
            <person name="Wollherr A."/>
            <person name="Heinemeyer I."/>
            <person name="Morgenstern B."/>
            <person name="Pommerening-Roeser A."/>
            <person name="Flores M."/>
            <person name="Palacios R."/>
            <person name="Brenner S."/>
            <person name="Gottschalk G."/>
            <person name="Schmitz R.A."/>
            <person name="Broughton W.J."/>
            <person name="Perret X."/>
            <person name="Strittmatter A.W."/>
            <person name="Streit W.R."/>
        </authorList>
    </citation>
    <scope>NUCLEOTIDE SEQUENCE [LARGE SCALE GENOMIC DNA]</scope>
    <source>
        <strain>NBRC 101917 / NGR234</strain>
    </source>
</reference>
<protein>
    <recommendedName>
        <fullName>Uncharacterized protein y4dX</fullName>
    </recommendedName>
</protein>
<keyword id="KW-0614">Plasmid</keyword>
<keyword id="KW-1185">Reference proteome</keyword>
<organism>
    <name type="scientific">Sinorhizobium fredii (strain NBRC 101917 / NGR234)</name>
    <dbReference type="NCBI Taxonomy" id="394"/>
    <lineage>
        <taxon>Bacteria</taxon>
        <taxon>Pseudomonadati</taxon>
        <taxon>Pseudomonadota</taxon>
        <taxon>Alphaproteobacteria</taxon>
        <taxon>Hyphomicrobiales</taxon>
        <taxon>Rhizobiaceae</taxon>
        <taxon>Sinorhizobium/Ensifer group</taxon>
        <taxon>Sinorhizobium</taxon>
    </lineage>
</organism>
<name>Y4DX_SINFN</name>
<gene>
    <name type="ordered locus">NGR_a03930</name>
    <name type="ORF">y4dX</name>
</gene>
<evidence type="ECO:0000256" key="1">
    <source>
        <dbReference type="SAM" id="MobiDB-lite"/>
    </source>
</evidence>
<feature type="chain" id="PRO_0000200826" description="Uncharacterized protein y4dX">
    <location>
        <begin position="1"/>
        <end position="192"/>
    </location>
</feature>
<feature type="region of interest" description="Disordered" evidence="1">
    <location>
        <begin position="17"/>
        <end position="73"/>
    </location>
</feature>
<feature type="compositionally biased region" description="Low complexity" evidence="1">
    <location>
        <begin position="30"/>
        <end position="41"/>
    </location>
</feature>
<accession>P55423</accession>
<sequence length="192" mass="20638">MAAHLCRGRGAVGRREMLRGSGKKPIQRLAKAPAATASSKTSEWRATTAYGFLPAGGDVRPHSPRYESQGVLSDPADLGERFAARDELAEEGKEERFAEPPDRRLGLDVKGAANDIGVEFIEDDPEAQVCIEAGPPLLDGRNFSRAASLLGLLGGDREKQNQVVIRSGKPHADGDWPILPPLYLSFSGLPRA</sequence>